<proteinExistence type="inferred from homology"/>
<name>RNPH_NEIMF</name>
<reference key="1">
    <citation type="journal article" date="2007" name="PLoS Genet.">
        <title>Meningococcal genetic variation mechanisms viewed through comparative analysis of serogroup C strain FAM18.</title>
        <authorList>
            <person name="Bentley S.D."/>
            <person name="Vernikos G.S."/>
            <person name="Snyder L.A.S."/>
            <person name="Churcher C."/>
            <person name="Arrowsmith C."/>
            <person name="Chillingworth T."/>
            <person name="Cronin A."/>
            <person name="Davis P.H."/>
            <person name="Holroyd N.E."/>
            <person name="Jagels K."/>
            <person name="Maddison M."/>
            <person name="Moule S."/>
            <person name="Rabbinowitsch E."/>
            <person name="Sharp S."/>
            <person name="Unwin L."/>
            <person name="Whitehead S."/>
            <person name="Quail M.A."/>
            <person name="Achtman M."/>
            <person name="Barrell B.G."/>
            <person name="Saunders N.J."/>
            <person name="Parkhill J."/>
        </authorList>
    </citation>
    <scope>NUCLEOTIDE SEQUENCE [LARGE SCALE GENOMIC DNA]</scope>
    <source>
        <strain>ATCC 700532 / DSM 15464 / FAM18</strain>
    </source>
</reference>
<gene>
    <name evidence="1" type="primary">rph</name>
    <name type="ordered locus">NMC1430</name>
</gene>
<dbReference type="EC" id="2.7.7.56" evidence="1"/>
<dbReference type="EMBL" id="AM421808">
    <property type="protein sequence ID" value="CAM10638.1"/>
    <property type="molecule type" value="Genomic_DNA"/>
</dbReference>
<dbReference type="RefSeq" id="WP_002212901.1">
    <property type="nucleotide sequence ID" value="NC_008767.1"/>
</dbReference>
<dbReference type="SMR" id="A1KUT9"/>
<dbReference type="GeneID" id="93387879"/>
<dbReference type="KEGG" id="nmc:NMC1430"/>
<dbReference type="HOGENOM" id="CLU_050858_0_0_4"/>
<dbReference type="Proteomes" id="UP000002286">
    <property type="component" value="Chromosome"/>
</dbReference>
<dbReference type="GO" id="GO:0000175">
    <property type="term" value="F:3'-5'-RNA exonuclease activity"/>
    <property type="evidence" value="ECO:0007669"/>
    <property type="project" value="UniProtKB-UniRule"/>
</dbReference>
<dbReference type="GO" id="GO:0000049">
    <property type="term" value="F:tRNA binding"/>
    <property type="evidence" value="ECO:0007669"/>
    <property type="project" value="UniProtKB-UniRule"/>
</dbReference>
<dbReference type="GO" id="GO:0009022">
    <property type="term" value="F:tRNA nucleotidyltransferase activity"/>
    <property type="evidence" value="ECO:0007669"/>
    <property type="project" value="UniProtKB-UniRule"/>
</dbReference>
<dbReference type="GO" id="GO:0016075">
    <property type="term" value="P:rRNA catabolic process"/>
    <property type="evidence" value="ECO:0007669"/>
    <property type="project" value="UniProtKB-UniRule"/>
</dbReference>
<dbReference type="GO" id="GO:0006364">
    <property type="term" value="P:rRNA processing"/>
    <property type="evidence" value="ECO:0007669"/>
    <property type="project" value="UniProtKB-KW"/>
</dbReference>
<dbReference type="GO" id="GO:0008033">
    <property type="term" value="P:tRNA processing"/>
    <property type="evidence" value="ECO:0007669"/>
    <property type="project" value="UniProtKB-UniRule"/>
</dbReference>
<dbReference type="CDD" id="cd11362">
    <property type="entry name" value="RNase_PH_bact"/>
    <property type="match status" value="1"/>
</dbReference>
<dbReference type="FunFam" id="3.30.230.70:FF:000003">
    <property type="entry name" value="Ribonuclease PH"/>
    <property type="match status" value="1"/>
</dbReference>
<dbReference type="Gene3D" id="3.30.230.70">
    <property type="entry name" value="GHMP Kinase, N-terminal domain"/>
    <property type="match status" value="1"/>
</dbReference>
<dbReference type="HAMAP" id="MF_00564">
    <property type="entry name" value="RNase_PH"/>
    <property type="match status" value="1"/>
</dbReference>
<dbReference type="InterPro" id="IPR001247">
    <property type="entry name" value="ExoRNase_PH_dom1"/>
</dbReference>
<dbReference type="InterPro" id="IPR015847">
    <property type="entry name" value="ExoRNase_PH_dom2"/>
</dbReference>
<dbReference type="InterPro" id="IPR036345">
    <property type="entry name" value="ExoRNase_PH_dom2_sf"/>
</dbReference>
<dbReference type="InterPro" id="IPR027408">
    <property type="entry name" value="PNPase/RNase_PH_dom_sf"/>
</dbReference>
<dbReference type="InterPro" id="IPR020568">
    <property type="entry name" value="Ribosomal_Su5_D2-typ_SF"/>
</dbReference>
<dbReference type="InterPro" id="IPR050080">
    <property type="entry name" value="RNase_PH"/>
</dbReference>
<dbReference type="InterPro" id="IPR002381">
    <property type="entry name" value="RNase_PH_bac-type"/>
</dbReference>
<dbReference type="InterPro" id="IPR018336">
    <property type="entry name" value="RNase_PH_CS"/>
</dbReference>
<dbReference type="NCBIfam" id="TIGR01966">
    <property type="entry name" value="RNasePH"/>
    <property type="match status" value="1"/>
</dbReference>
<dbReference type="PANTHER" id="PTHR11953">
    <property type="entry name" value="EXOSOME COMPLEX COMPONENT"/>
    <property type="match status" value="1"/>
</dbReference>
<dbReference type="PANTHER" id="PTHR11953:SF0">
    <property type="entry name" value="EXOSOME COMPLEX COMPONENT RRP41"/>
    <property type="match status" value="1"/>
</dbReference>
<dbReference type="Pfam" id="PF01138">
    <property type="entry name" value="RNase_PH"/>
    <property type="match status" value="1"/>
</dbReference>
<dbReference type="Pfam" id="PF03725">
    <property type="entry name" value="RNase_PH_C"/>
    <property type="match status" value="1"/>
</dbReference>
<dbReference type="SUPFAM" id="SSF55666">
    <property type="entry name" value="Ribonuclease PH domain 2-like"/>
    <property type="match status" value="1"/>
</dbReference>
<dbReference type="SUPFAM" id="SSF54211">
    <property type="entry name" value="Ribosomal protein S5 domain 2-like"/>
    <property type="match status" value="1"/>
</dbReference>
<dbReference type="PROSITE" id="PS01277">
    <property type="entry name" value="RIBONUCLEASE_PH"/>
    <property type="match status" value="1"/>
</dbReference>
<keyword id="KW-0548">Nucleotidyltransferase</keyword>
<keyword id="KW-0694">RNA-binding</keyword>
<keyword id="KW-0698">rRNA processing</keyword>
<keyword id="KW-0808">Transferase</keyword>
<keyword id="KW-0819">tRNA processing</keyword>
<keyword id="KW-0820">tRNA-binding</keyword>
<feature type="chain" id="PRO_1000024839" description="Ribonuclease PH">
    <location>
        <begin position="1"/>
        <end position="242"/>
    </location>
</feature>
<feature type="binding site" evidence="1">
    <location>
        <position position="89"/>
    </location>
    <ligand>
        <name>phosphate</name>
        <dbReference type="ChEBI" id="CHEBI:43474"/>
        <note>substrate</note>
    </ligand>
</feature>
<feature type="binding site" evidence="1">
    <location>
        <begin position="127"/>
        <end position="129"/>
    </location>
    <ligand>
        <name>phosphate</name>
        <dbReference type="ChEBI" id="CHEBI:43474"/>
        <note>substrate</note>
    </ligand>
</feature>
<evidence type="ECO:0000255" key="1">
    <source>
        <dbReference type="HAMAP-Rule" id="MF_00564"/>
    </source>
</evidence>
<accession>A1KUT9</accession>
<sequence>MPDYIRISRAADSLRDIKITPHFLPHTDGSCLIECGNTKVICTASIDENVPPFLRGKNQGWVTAEYGMLPASTASRMRREASAGKQSGRTQEIQRLIGRSLRAVVDMEKLGERQILIDCDVIQADGGTRTASITGAFVALQIAVGKLVSDGILSENPIREAVAAVSVGVVNGVPLLDLDYPEDSGCDSDVNIVMTASGKIIEIQGTAEDAPFSLDELGKLVALAQKGIGELLQHQQNALSAA</sequence>
<organism>
    <name type="scientific">Neisseria meningitidis serogroup C / serotype 2a (strain ATCC 700532 / DSM 15464 / FAM18)</name>
    <dbReference type="NCBI Taxonomy" id="272831"/>
    <lineage>
        <taxon>Bacteria</taxon>
        <taxon>Pseudomonadati</taxon>
        <taxon>Pseudomonadota</taxon>
        <taxon>Betaproteobacteria</taxon>
        <taxon>Neisseriales</taxon>
        <taxon>Neisseriaceae</taxon>
        <taxon>Neisseria</taxon>
    </lineage>
</organism>
<protein>
    <recommendedName>
        <fullName evidence="1">Ribonuclease PH</fullName>
        <shortName evidence="1">RNase PH</shortName>
        <ecNumber evidence="1">2.7.7.56</ecNumber>
    </recommendedName>
    <alternativeName>
        <fullName evidence="1">tRNA nucleotidyltransferase</fullName>
    </alternativeName>
</protein>
<comment type="function">
    <text evidence="1">Phosphorolytic 3'-5' exoribonuclease that plays an important role in tRNA 3'-end maturation. Removes nucleotide residues following the 3'-CCA terminus of tRNAs; can also add nucleotides to the ends of RNA molecules by using nucleoside diphosphates as substrates, but this may not be physiologically important. Probably plays a role in initiation of 16S rRNA degradation (leading to ribosome degradation) during starvation.</text>
</comment>
<comment type="catalytic activity">
    <reaction evidence="1">
        <text>tRNA(n+1) + phosphate = tRNA(n) + a ribonucleoside 5'-diphosphate</text>
        <dbReference type="Rhea" id="RHEA:10628"/>
        <dbReference type="Rhea" id="RHEA-COMP:17343"/>
        <dbReference type="Rhea" id="RHEA-COMP:17344"/>
        <dbReference type="ChEBI" id="CHEBI:43474"/>
        <dbReference type="ChEBI" id="CHEBI:57930"/>
        <dbReference type="ChEBI" id="CHEBI:173114"/>
        <dbReference type="EC" id="2.7.7.56"/>
    </reaction>
</comment>
<comment type="subunit">
    <text evidence="1">Homohexameric ring arranged as a trimer of dimers.</text>
</comment>
<comment type="similarity">
    <text evidence="1">Belongs to the RNase PH family.</text>
</comment>